<dbReference type="EC" id="3.1.1.8"/>
<dbReference type="EMBL" id="M62411">
    <property type="protein sequence ID" value="AAA51451.1"/>
    <property type="molecule type" value="Genomic_DNA"/>
</dbReference>
<dbReference type="PIR" id="E39768">
    <property type="entry name" value="E39768"/>
</dbReference>
<dbReference type="SMR" id="P32750"/>
<dbReference type="FunCoup" id="P32750">
    <property type="interactions" value="46"/>
</dbReference>
<dbReference type="STRING" id="9615.ENSCAFP00000021376"/>
<dbReference type="BindingDB" id="P32750"/>
<dbReference type="ChEMBL" id="CHEMBL4630814"/>
<dbReference type="DrugCentral" id="P32750"/>
<dbReference type="ESTHER" id="canfa-BCHE">
    <property type="family name" value="BCHE"/>
</dbReference>
<dbReference type="MEROPS" id="S09.980"/>
<dbReference type="GlyCosmos" id="P32750">
    <property type="glycosylation" value="1 site, No reported glycans"/>
</dbReference>
<dbReference type="PaxDb" id="9612-ENSCAFP00000021376"/>
<dbReference type="eggNOG" id="KOG4389">
    <property type="taxonomic scope" value="Eukaryota"/>
</dbReference>
<dbReference type="InParanoid" id="P32750"/>
<dbReference type="OrthoDB" id="9000293at2759"/>
<dbReference type="BRENDA" id="3.1.1.8">
    <property type="organism ID" value="1153"/>
</dbReference>
<dbReference type="Proteomes" id="UP000002254">
    <property type="component" value="Unplaced"/>
</dbReference>
<dbReference type="Proteomes" id="UP000694429">
    <property type="component" value="Unplaced"/>
</dbReference>
<dbReference type="Proteomes" id="UP000694542">
    <property type="component" value="Unplaced"/>
</dbReference>
<dbReference type="Proteomes" id="UP000805418">
    <property type="component" value="Unplaced"/>
</dbReference>
<dbReference type="GO" id="GO:0005576">
    <property type="term" value="C:extracellular region"/>
    <property type="evidence" value="ECO:0007669"/>
    <property type="project" value="UniProtKB-SubCell"/>
</dbReference>
<dbReference type="GO" id="GO:0003990">
    <property type="term" value="F:acetylcholinesterase activity"/>
    <property type="evidence" value="ECO:0000250"/>
    <property type="project" value="UniProtKB"/>
</dbReference>
<dbReference type="GO" id="GO:0004104">
    <property type="term" value="F:cholinesterase activity"/>
    <property type="evidence" value="ECO:0000250"/>
    <property type="project" value="UniProtKB"/>
</dbReference>
<dbReference type="FunFam" id="3.40.50.1820:FF:000598">
    <property type="entry name" value="Cholinesterase"/>
    <property type="match status" value="1"/>
</dbReference>
<dbReference type="Gene3D" id="3.40.50.1820">
    <property type="entry name" value="alpha/beta hydrolase"/>
    <property type="match status" value="1"/>
</dbReference>
<dbReference type="InterPro" id="IPR029058">
    <property type="entry name" value="AB_hydrolase_fold"/>
</dbReference>
<dbReference type="InterPro" id="IPR050654">
    <property type="entry name" value="AChE-related_enzymes"/>
</dbReference>
<dbReference type="InterPro" id="IPR002018">
    <property type="entry name" value="CarbesteraseB"/>
</dbReference>
<dbReference type="InterPro" id="IPR019826">
    <property type="entry name" value="Carboxylesterase_B_AS"/>
</dbReference>
<dbReference type="InterPro" id="IPR019819">
    <property type="entry name" value="Carboxylesterase_B_CS"/>
</dbReference>
<dbReference type="InterPro" id="IPR000997">
    <property type="entry name" value="Cholinesterase"/>
</dbReference>
<dbReference type="PANTHER" id="PTHR43918">
    <property type="entry name" value="ACETYLCHOLINESTERASE"/>
    <property type="match status" value="1"/>
</dbReference>
<dbReference type="PANTHER" id="PTHR43918:SF5">
    <property type="entry name" value="CHOLINESTERASE"/>
    <property type="match status" value="1"/>
</dbReference>
<dbReference type="Pfam" id="PF00135">
    <property type="entry name" value="COesterase"/>
    <property type="match status" value="1"/>
</dbReference>
<dbReference type="PRINTS" id="PR00878">
    <property type="entry name" value="CHOLNESTRASE"/>
</dbReference>
<dbReference type="SUPFAM" id="SSF53474">
    <property type="entry name" value="alpha/beta-Hydrolases"/>
    <property type="match status" value="1"/>
</dbReference>
<dbReference type="PROSITE" id="PS00122">
    <property type="entry name" value="CARBOXYLESTERASE_B_1"/>
    <property type="match status" value="1"/>
</dbReference>
<dbReference type="PROSITE" id="PS00941">
    <property type="entry name" value="CARBOXYLESTERASE_B_2"/>
    <property type="match status" value="1"/>
</dbReference>
<feature type="chain" id="PRO_0000070284" description="Cholinesterase">
    <location>
        <begin position="1" status="less than"/>
        <end position="141" status="greater than"/>
    </location>
</feature>
<feature type="active site" description="Acyl-ester intermediate" evidence="4">
    <location>
        <position position="131"/>
    </location>
</feature>
<feature type="binding site" evidence="1">
    <location>
        <begin position="49"/>
        <end position="50"/>
    </location>
    <ligand>
        <name>substrate</name>
    </ligand>
</feature>
<feature type="modified residue" description="Phosphoserine" evidence="2">
    <location>
        <position position="131"/>
    </location>
</feature>
<feature type="glycosylation site" description="N-linked (GlcNAc...) asparagine" evidence="3">
    <location>
        <position position="39"/>
    </location>
</feature>
<feature type="non-terminal residue">
    <location>
        <position position="1"/>
    </location>
</feature>
<feature type="non-terminal residue">
    <location>
        <position position="141"/>
    </location>
</feature>
<organism>
    <name type="scientific">Canis lupus familiaris</name>
    <name type="common">Dog</name>
    <name type="synonym">Canis familiaris</name>
    <dbReference type="NCBI Taxonomy" id="9615"/>
    <lineage>
        <taxon>Eukaryota</taxon>
        <taxon>Metazoa</taxon>
        <taxon>Chordata</taxon>
        <taxon>Craniata</taxon>
        <taxon>Vertebrata</taxon>
        <taxon>Euteleostomi</taxon>
        <taxon>Mammalia</taxon>
        <taxon>Eutheria</taxon>
        <taxon>Laurasiatheria</taxon>
        <taxon>Carnivora</taxon>
        <taxon>Caniformia</taxon>
        <taxon>Canidae</taxon>
        <taxon>Canis</taxon>
    </lineage>
</organism>
<reference key="1">
    <citation type="journal article" date="1991" name="J. Biol. Chem.">
        <title>Use of the polymerase chain reaction for homology probing of butyrylcholinesterase from several vertebrates.</title>
        <authorList>
            <person name="Arpagaus M."/>
            <person name="Chatonnet A."/>
            <person name="Masson P."/>
            <person name="Newton M."/>
            <person name="Vaughan T.A."/>
            <person name="Bartels C.F."/>
            <person name="Nogueira C.P."/>
            <person name="la Du B.N."/>
            <person name="Lockridge O."/>
        </authorList>
    </citation>
    <scope>NUCLEOTIDE SEQUENCE [GENOMIC DNA]</scope>
    <source>
        <tissue>Liver</tissue>
    </source>
</reference>
<keyword id="KW-1015">Disulfide bond</keyword>
<keyword id="KW-0325">Glycoprotein</keyword>
<keyword id="KW-0378">Hydrolase</keyword>
<keyword id="KW-0597">Phosphoprotein</keyword>
<keyword id="KW-1185">Reference proteome</keyword>
<keyword id="KW-0964">Secreted</keyword>
<keyword id="KW-0719">Serine esterase</keyword>
<gene>
    <name type="primary">BCHE</name>
</gene>
<evidence type="ECO:0000250" key="1"/>
<evidence type="ECO:0000250" key="2">
    <source>
        <dbReference type="UniProtKB" id="P06276"/>
    </source>
</evidence>
<evidence type="ECO:0000255" key="3"/>
<evidence type="ECO:0000255" key="4">
    <source>
        <dbReference type="PROSITE-ProRule" id="PRU10039"/>
    </source>
</evidence>
<evidence type="ECO:0000305" key="5"/>
<name>CHLE_CANLF</name>
<sequence>NTDQSFPGFPGSEMWNPNTDLSEDCLYLNVWIPTPKPKNATVMIWIYGGGFQTGTSSLPVYDGKFLARVERVIVVSVNYRVGALGFLALPGNPEAPGNLGLFDQQLALQWVQKNIAAFGGNPKSVTLFGESAGAGSVGLHL</sequence>
<protein>
    <recommendedName>
        <fullName>Cholinesterase</fullName>
        <ecNumber>3.1.1.8</ecNumber>
    </recommendedName>
    <alternativeName>
        <fullName>Acylcholine acylhydrolase</fullName>
    </alternativeName>
    <alternativeName>
        <fullName>Butyrylcholine esterase</fullName>
    </alternativeName>
    <alternativeName>
        <fullName>Choline esterase II</fullName>
    </alternativeName>
    <alternativeName>
        <fullName>Pseudocholinesterase</fullName>
    </alternativeName>
</protein>
<accession>P32750</accession>
<proteinExistence type="evidence at transcript level"/>
<comment type="function">
    <text evidence="1">Esterase with broad substrate specificity. Contributes to the inactivation of the neurotransmitter acetylcholine. Can degrade neurotoxic organophosphate esters (By similarity).</text>
</comment>
<comment type="catalytic activity">
    <reaction>
        <text>an acylcholine + H2O = a carboxylate + choline + H(+)</text>
        <dbReference type="Rhea" id="RHEA:21964"/>
        <dbReference type="ChEBI" id="CHEBI:15354"/>
        <dbReference type="ChEBI" id="CHEBI:15377"/>
        <dbReference type="ChEBI" id="CHEBI:15378"/>
        <dbReference type="ChEBI" id="CHEBI:29067"/>
        <dbReference type="ChEBI" id="CHEBI:35287"/>
        <dbReference type="EC" id="3.1.1.8"/>
    </reaction>
</comment>
<comment type="subunit">
    <text evidence="1">Homotetramer; disulfide-linked. Dimer of dimers (By similarity).</text>
</comment>
<comment type="subcellular location">
    <subcellularLocation>
        <location evidence="1">Secreted</location>
    </subcellularLocation>
</comment>
<comment type="tissue specificity">
    <text>Present in most cells except erythrocytes.</text>
</comment>
<comment type="similarity">
    <text evidence="5">Belongs to the type-B carboxylesterase/lipase family.</text>
</comment>